<reference key="1">
    <citation type="journal article" date="2006" name="Proc. Natl. Acad. Sci. U.S.A.">
        <title>Genome reduction in Leptospira borgpetersenii reflects limited transmission potential.</title>
        <authorList>
            <person name="Bulach D.M."/>
            <person name="Zuerner R.L."/>
            <person name="Wilson P."/>
            <person name="Seemann T."/>
            <person name="McGrath A."/>
            <person name="Cullen P.A."/>
            <person name="Davis J."/>
            <person name="Johnson M."/>
            <person name="Kuczek E."/>
            <person name="Alt D.P."/>
            <person name="Peterson-Burch B."/>
            <person name="Coppel R.L."/>
            <person name="Rood J.I."/>
            <person name="Davies J.K."/>
            <person name="Adler B."/>
        </authorList>
    </citation>
    <scope>NUCLEOTIDE SEQUENCE [LARGE SCALE GENOMIC DNA]</scope>
    <source>
        <strain>L550</strain>
    </source>
</reference>
<name>G6PI_LEPBL</name>
<organism>
    <name type="scientific">Leptospira borgpetersenii serovar Hardjo-bovis (strain L550)</name>
    <dbReference type="NCBI Taxonomy" id="355276"/>
    <lineage>
        <taxon>Bacteria</taxon>
        <taxon>Pseudomonadati</taxon>
        <taxon>Spirochaetota</taxon>
        <taxon>Spirochaetia</taxon>
        <taxon>Leptospirales</taxon>
        <taxon>Leptospiraceae</taxon>
        <taxon>Leptospira</taxon>
    </lineage>
</organism>
<evidence type="ECO:0000255" key="1">
    <source>
        <dbReference type="HAMAP-Rule" id="MF_00473"/>
    </source>
</evidence>
<proteinExistence type="inferred from homology"/>
<protein>
    <recommendedName>
        <fullName evidence="1">Glucose-6-phosphate isomerase</fullName>
        <shortName evidence="1">GPI</shortName>
        <ecNumber evidence="1">5.3.1.9</ecNumber>
    </recommendedName>
    <alternativeName>
        <fullName evidence="1">Phosphoglucose isomerase</fullName>
        <shortName evidence="1">PGI</shortName>
    </alternativeName>
    <alternativeName>
        <fullName evidence="1">Phosphohexose isomerase</fullName>
        <shortName evidence="1">PHI</shortName>
    </alternativeName>
</protein>
<dbReference type="EC" id="5.3.1.9" evidence="1"/>
<dbReference type="EMBL" id="CP000348">
    <property type="protein sequence ID" value="ABJ79856.1"/>
    <property type="molecule type" value="Genomic_DNA"/>
</dbReference>
<dbReference type="RefSeq" id="WP_011670835.1">
    <property type="nucleotide sequence ID" value="NC_008508.1"/>
</dbReference>
<dbReference type="SMR" id="Q04YI9"/>
<dbReference type="KEGG" id="lbl:LBL_2480"/>
<dbReference type="HOGENOM" id="CLU_037303_0_1_12"/>
<dbReference type="UniPathway" id="UPA00109">
    <property type="reaction ID" value="UER00181"/>
</dbReference>
<dbReference type="UniPathway" id="UPA00138"/>
<dbReference type="GO" id="GO:0005829">
    <property type="term" value="C:cytosol"/>
    <property type="evidence" value="ECO:0007669"/>
    <property type="project" value="TreeGrafter"/>
</dbReference>
<dbReference type="GO" id="GO:0097367">
    <property type="term" value="F:carbohydrate derivative binding"/>
    <property type="evidence" value="ECO:0007669"/>
    <property type="project" value="InterPro"/>
</dbReference>
<dbReference type="GO" id="GO:0004347">
    <property type="term" value="F:glucose-6-phosphate isomerase activity"/>
    <property type="evidence" value="ECO:0007669"/>
    <property type="project" value="UniProtKB-UniRule"/>
</dbReference>
<dbReference type="GO" id="GO:0048029">
    <property type="term" value="F:monosaccharide binding"/>
    <property type="evidence" value="ECO:0007669"/>
    <property type="project" value="TreeGrafter"/>
</dbReference>
<dbReference type="GO" id="GO:0006094">
    <property type="term" value="P:gluconeogenesis"/>
    <property type="evidence" value="ECO:0007669"/>
    <property type="project" value="UniProtKB-UniRule"/>
</dbReference>
<dbReference type="GO" id="GO:0051156">
    <property type="term" value="P:glucose 6-phosphate metabolic process"/>
    <property type="evidence" value="ECO:0007669"/>
    <property type="project" value="TreeGrafter"/>
</dbReference>
<dbReference type="GO" id="GO:0006096">
    <property type="term" value="P:glycolytic process"/>
    <property type="evidence" value="ECO:0007669"/>
    <property type="project" value="UniProtKB-UniRule"/>
</dbReference>
<dbReference type="CDD" id="cd05015">
    <property type="entry name" value="SIS_PGI_1"/>
    <property type="match status" value="1"/>
</dbReference>
<dbReference type="CDD" id="cd05016">
    <property type="entry name" value="SIS_PGI_2"/>
    <property type="match status" value="1"/>
</dbReference>
<dbReference type="FunFam" id="3.40.50.10490:FF:000015">
    <property type="entry name" value="Glucose-6-phosphate isomerase"/>
    <property type="match status" value="1"/>
</dbReference>
<dbReference type="FunFam" id="3.40.50.10490:FF:000016">
    <property type="entry name" value="Glucose-6-phosphate isomerase"/>
    <property type="match status" value="1"/>
</dbReference>
<dbReference type="Gene3D" id="3.40.50.10490">
    <property type="entry name" value="Glucose-6-phosphate isomerase like protein, domain 1"/>
    <property type="match status" value="2"/>
</dbReference>
<dbReference type="HAMAP" id="MF_00473">
    <property type="entry name" value="G6P_isomerase"/>
    <property type="match status" value="1"/>
</dbReference>
<dbReference type="InterPro" id="IPR001672">
    <property type="entry name" value="G6P_Isomerase"/>
</dbReference>
<dbReference type="InterPro" id="IPR018189">
    <property type="entry name" value="Phosphoglucose_isomerase_CS"/>
</dbReference>
<dbReference type="InterPro" id="IPR046348">
    <property type="entry name" value="SIS_dom_sf"/>
</dbReference>
<dbReference type="InterPro" id="IPR035476">
    <property type="entry name" value="SIS_PGI_1"/>
</dbReference>
<dbReference type="InterPro" id="IPR035482">
    <property type="entry name" value="SIS_PGI_2"/>
</dbReference>
<dbReference type="NCBIfam" id="NF010697">
    <property type="entry name" value="PRK14097.1"/>
    <property type="match status" value="1"/>
</dbReference>
<dbReference type="PANTHER" id="PTHR11469">
    <property type="entry name" value="GLUCOSE-6-PHOSPHATE ISOMERASE"/>
    <property type="match status" value="1"/>
</dbReference>
<dbReference type="PANTHER" id="PTHR11469:SF1">
    <property type="entry name" value="GLUCOSE-6-PHOSPHATE ISOMERASE"/>
    <property type="match status" value="1"/>
</dbReference>
<dbReference type="Pfam" id="PF00342">
    <property type="entry name" value="PGI"/>
    <property type="match status" value="1"/>
</dbReference>
<dbReference type="PRINTS" id="PR00662">
    <property type="entry name" value="G6PISOMERASE"/>
</dbReference>
<dbReference type="SUPFAM" id="SSF53697">
    <property type="entry name" value="SIS domain"/>
    <property type="match status" value="1"/>
</dbReference>
<dbReference type="PROSITE" id="PS00765">
    <property type="entry name" value="P_GLUCOSE_ISOMERASE_1"/>
    <property type="match status" value="1"/>
</dbReference>
<dbReference type="PROSITE" id="PS51463">
    <property type="entry name" value="P_GLUCOSE_ISOMERASE_3"/>
    <property type="match status" value="1"/>
</dbReference>
<sequence>MIRLETRFASSFVNSRKFESFLTEAESSRRTLHSFQGKGNEYLGWLNLPKEIKESEIEKIIQVAQRLRDSSEVIVVIGIGGSYLGSRAVLEATLPFFRRSSKGNPEIFFAGHHLESRYLSELMEYLKDRDFSVNVISKSGTTTEPAIAFRLFWELLRKKYGASAASRVVATTDFSKGTLKTFANVEGFETFTIPDNVGGRYSVLTPVGLFPLAAAGIPIRKFILGSQNILKDLHAETDPVRNPATYYSAFRNYFLSEGRHIEILANFNPSLRYISEWWKQLFGESEGKENKGIFPASMDFTTDLHSLGQYVQEGKRILFETVLSPSDVHSNLILRPTPDNLDSLNFLSGNTLGHVNEQARLGTLLAHADGGVPCLELIFPDISPESLGEVMYFFEYSCAISGYSLGVNPFDQPGVDAYKKNMFALLNKVGFEKEGDFLRKRILGN</sequence>
<keyword id="KW-0963">Cytoplasm</keyword>
<keyword id="KW-0312">Gluconeogenesis</keyword>
<keyword id="KW-0324">Glycolysis</keyword>
<keyword id="KW-0413">Isomerase</keyword>
<accession>Q04YI9</accession>
<gene>
    <name evidence="1" type="primary">pgi</name>
    <name type="ordered locus">LBL_2480</name>
</gene>
<comment type="function">
    <text evidence="1">Catalyzes the reversible isomerization of glucose-6-phosphate to fructose-6-phosphate.</text>
</comment>
<comment type="catalytic activity">
    <reaction evidence="1">
        <text>alpha-D-glucose 6-phosphate = beta-D-fructose 6-phosphate</text>
        <dbReference type="Rhea" id="RHEA:11816"/>
        <dbReference type="ChEBI" id="CHEBI:57634"/>
        <dbReference type="ChEBI" id="CHEBI:58225"/>
        <dbReference type="EC" id="5.3.1.9"/>
    </reaction>
</comment>
<comment type="pathway">
    <text evidence="1">Carbohydrate biosynthesis; gluconeogenesis.</text>
</comment>
<comment type="pathway">
    <text evidence="1">Carbohydrate degradation; glycolysis; D-glyceraldehyde 3-phosphate and glycerone phosphate from D-glucose: step 2/4.</text>
</comment>
<comment type="subcellular location">
    <subcellularLocation>
        <location evidence="1">Cytoplasm</location>
    </subcellularLocation>
</comment>
<comment type="similarity">
    <text evidence="1">Belongs to the GPI family.</text>
</comment>
<feature type="chain" id="PRO_1000013983" description="Glucose-6-phosphate isomerase">
    <location>
        <begin position="1"/>
        <end position="445"/>
    </location>
</feature>
<feature type="active site" description="Proton donor" evidence="1">
    <location>
        <position position="284"/>
    </location>
</feature>
<feature type="active site" evidence="1">
    <location>
        <position position="305"/>
    </location>
</feature>
<feature type="active site" evidence="1">
    <location>
        <position position="419"/>
    </location>
</feature>